<comment type="function">
    <text evidence="1 2 6">Substrate recognition component of a DCX (DDB1-CUL4-X-box) E3 protein ligase complex that mediates the ubiquitination and subsequent proteasomal degradation of target proteins, such as MEIS2 (Probable). Normal degradation of key regulatory proteins is required for normal limb outgrowth and expression of the fibroblast growth factor FGF8. Maintains presynaptic glutamate release and consequently cognitive functions, such as memory and learning, by negatively regulating large-conductance calcium-activated potassium (BK) channels in excitatory neurons. Likely to function by regulating the assembly and neuronal surface expression of BK channels via its interaction with KCNT1 (By similarity). May also be involved in regulating anxiety-like behaviors via a BK channel-independent mechanism (By similarity).</text>
</comment>
<comment type="pathway">
    <text evidence="2">Protein modification; protein ubiquitination.</text>
</comment>
<comment type="subunit">
    <text evidence="2">Component of a DCX (DDB1-CUL4-X-box) protein ligase complex.</text>
</comment>
<comment type="subcellular location">
    <subcellularLocation>
        <location evidence="2">Cytoplasm</location>
    </subcellularLocation>
    <subcellularLocation>
        <location evidence="2">Nucleus</location>
    </subcellularLocation>
</comment>
<comment type="similarity">
    <text evidence="6">Belongs to the CRBN family.</text>
</comment>
<organism>
    <name type="scientific">Xenopus tropicalis</name>
    <name type="common">Western clawed frog</name>
    <name type="synonym">Silurana tropicalis</name>
    <dbReference type="NCBI Taxonomy" id="8364"/>
    <lineage>
        <taxon>Eukaryota</taxon>
        <taxon>Metazoa</taxon>
        <taxon>Chordata</taxon>
        <taxon>Craniata</taxon>
        <taxon>Vertebrata</taxon>
        <taxon>Euteleostomi</taxon>
        <taxon>Amphibia</taxon>
        <taxon>Batrachia</taxon>
        <taxon>Anura</taxon>
        <taxon>Pipoidea</taxon>
        <taxon>Pipidae</taxon>
        <taxon>Xenopodinae</taxon>
        <taxon>Xenopus</taxon>
        <taxon>Silurana</taxon>
    </lineage>
</organism>
<accession>Q640S2</accession>
<dbReference type="EMBL" id="BC082517">
    <property type="protein sequence ID" value="AAH82517.1"/>
    <property type="molecule type" value="mRNA"/>
</dbReference>
<dbReference type="RefSeq" id="NP_001008192.1">
    <property type="nucleotide sequence ID" value="NM_001008191.1"/>
</dbReference>
<dbReference type="SMR" id="Q640S2"/>
<dbReference type="FunCoup" id="Q640S2">
    <property type="interactions" value="3955"/>
</dbReference>
<dbReference type="STRING" id="8364.ENSXETP00000044533"/>
<dbReference type="PaxDb" id="8364-ENSXETP00000011183"/>
<dbReference type="DNASU" id="493554"/>
<dbReference type="GeneID" id="493554"/>
<dbReference type="KEGG" id="xtr:493554"/>
<dbReference type="AGR" id="Xenbase:XB-GENE-973907"/>
<dbReference type="CTD" id="51185"/>
<dbReference type="Xenbase" id="XB-GENE-973907">
    <property type="gene designation" value="crbn"/>
</dbReference>
<dbReference type="eggNOG" id="KOG1400">
    <property type="taxonomic scope" value="Eukaryota"/>
</dbReference>
<dbReference type="HOGENOM" id="CLU_025648_1_1_1"/>
<dbReference type="InParanoid" id="Q640S2"/>
<dbReference type="OMA" id="AYQMYDS"/>
<dbReference type="OrthoDB" id="267517at2759"/>
<dbReference type="PhylomeDB" id="Q640S2"/>
<dbReference type="TreeFam" id="TF106115"/>
<dbReference type="UniPathway" id="UPA00143"/>
<dbReference type="Proteomes" id="UP000008143">
    <property type="component" value="Chromosome 4"/>
</dbReference>
<dbReference type="Bgee" id="ENSXETG00000005146">
    <property type="expression patterns" value="Expressed in skeletal muscle tissue and 13 other cell types or tissues"/>
</dbReference>
<dbReference type="ExpressionAtlas" id="Q640S2">
    <property type="expression patterns" value="baseline and differential"/>
</dbReference>
<dbReference type="GO" id="GO:0031464">
    <property type="term" value="C:Cul4A-RING E3 ubiquitin ligase complex"/>
    <property type="evidence" value="ECO:0000250"/>
    <property type="project" value="UniProtKB"/>
</dbReference>
<dbReference type="GO" id="GO:0005737">
    <property type="term" value="C:cytoplasm"/>
    <property type="evidence" value="ECO:0000250"/>
    <property type="project" value="UniProtKB"/>
</dbReference>
<dbReference type="GO" id="GO:0005634">
    <property type="term" value="C:nucleus"/>
    <property type="evidence" value="ECO:0000250"/>
    <property type="project" value="UniProtKB"/>
</dbReference>
<dbReference type="GO" id="GO:0046872">
    <property type="term" value="F:metal ion binding"/>
    <property type="evidence" value="ECO:0007669"/>
    <property type="project" value="UniProtKB-KW"/>
</dbReference>
<dbReference type="GO" id="GO:0043161">
    <property type="term" value="P:proteasome-mediated ubiquitin-dependent protein catabolic process"/>
    <property type="evidence" value="ECO:0000250"/>
    <property type="project" value="UniProtKB"/>
</dbReference>
<dbReference type="GO" id="GO:0016567">
    <property type="term" value="P:protein ubiquitination"/>
    <property type="evidence" value="ECO:0000250"/>
    <property type="project" value="UniProtKB"/>
</dbReference>
<dbReference type="CDD" id="cd15777">
    <property type="entry name" value="CRBN_C_like"/>
    <property type="match status" value="1"/>
</dbReference>
<dbReference type="FunFam" id="1.20.58.1480:FF:000004">
    <property type="entry name" value="Cereblon, isoform CRA_c"/>
    <property type="match status" value="1"/>
</dbReference>
<dbReference type="FunFam" id="2.170.150.20:FF:000002">
    <property type="entry name" value="Cereblon, isoform CRA_c"/>
    <property type="match status" value="1"/>
</dbReference>
<dbReference type="FunFam" id="2.30.130.40:FF:000002">
    <property type="entry name" value="Cereblon, isoform CRA_c"/>
    <property type="match status" value="1"/>
</dbReference>
<dbReference type="Gene3D" id="1.20.58.1480">
    <property type="match status" value="1"/>
</dbReference>
<dbReference type="Gene3D" id="2.30.130.40">
    <property type="entry name" value="LON domain-like"/>
    <property type="match status" value="1"/>
</dbReference>
<dbReference type="Gene3D" id="2.170.150.20">
    <property type="entry name" value="Peptide methionine sulfoxide reductase"/>
    <property type="match status" value="1"/>
</dbReference>
<dbReference type="InterPro" id="IPR034750">
    <property type="entry name" value="CULT"/>
</dbReference>
<dbReference type="InterPro" id="IPR003111">
    <property type="entry name" value="Lon_prtase_N"/>
</dbReference>
<dbReference type="InterPro" id="IPR046336">
    <property type="entry name" value="Lon_prtase_N_sf"/>
</dbReference>
<dbReference type="InterPro" id="IPR015947">
    <property type="entry name" value="PUA-like_sf"/>
</dbReference>
<dbReference type="InterPro" id="IPR004910">
    <property type="entry name" value="Yippee/Mis18/Cereblon"/>
</dbReference>
<dbReference type="PANTHER" id="PTHR14255">
    <property type="entry name" value="CEREBLON"/>
    <property type="match status" value="1"/>
</dbReference>
<dbReference type="PANTHER" id="PTHR14255:SF4">
    <property type="entry name" value="PROTEIN CEREBLON"/>
    <property type="match status" value="1"/>
</dbReference>
<dbReference type="Pfam" id="PF02190">
    <property type="entry name" value="LON_substr_bdg"/>
    <property type="match status" value="1"/>
</dbReference>
<dbReference type="Pfam" id="PF03226">
    <property type="entry name" value="Yippee-Mis18"/>
    <property type="match status" value="1"/>
</dbReference>
<dbReference type="SMART" id="SM00464">
    <property type="entry name" value="LON"/>
    <property type="match status" value="1"/>
</dbReference>
<dbReference type="SUPFAM" id="SSF88697">
    <property type="entry name" value="PUA domain-like"/>
    <property type="match status" value="1"/>
</dbReference>
<dbReference type="PROSITE" id="PS51788">
    <property type="entry name" value="CULT"/>
    <property type="match status" value="1"/>
</dbReference>
<dbReference type="PROSITE" id="PS51787">
    <property type="entry name" value="LON_N"/>
    <property type="match status" value="1"/>
</dbReference>
<sequence length="447" mass="50667">MADDEGEEDPGINNMGNLLQVISSESEEEDEMELEDAKTADSESPNIINFDTSLPTSHAYLGVDMEEFHGRTLHDDDSCQQIPVLPHVQVMLIPGQTLPLHLSRPQEVSMVRGLIQRDRTFAVLAYSDGLQREAHFGTTAEIYAYREEHEFGIETVKVKAIGRQRFQVLETRTQADGIQVARVQILPERVLPCPMTSLQLDSQSRHLLFPTNKPVSGRSPQSKCQWLHKYRRRKFLGASLTSWPSWLYALYDADSLMERVKLQLHEWDENLRDDSLPANPIDFSYRVAACLPIDDALRIQLLQIGNAIQRLRCELDIMSKCTSLCCKHCPDTEITTKNEIFSLSLCGPMAAYVNPHGYVHETLTVYKAFNLSLVGRPSTENSWFPGFAWTIAQCRVCGSHMGWKFTAVRKDLSPQKFWGLTRSALQPRIPEPDEGEMGHDHSPILCL</sequence>
<proteinExistence type="evidence at transcript level"/>
<protein>
    <recommendedName>
        <fullName>Protein cereblon</fullName>
    </recommendedName>
</protein>
<keyword id="KW-0963">Cytoplasm</keyword>
<keyword id="KW-0479">Metal-binding</keyword>
<keyword id="KW-0539">Nucleus</keyword>
<keyword id="KW-1185">Reference proteome</keyword>
<keyword id="KW-0833">Ubl conjugation pathway</keyword>
<keyword id="KW-0862">Zinc</keyword>
<evidence type="ECO:0000250" key="1">
    <source>
        <dbReference type="UniProtKB" id="Q8C7D2"/>
    </source>
</evidence>
<evidence type="ECO:0000250" key="2">
    <source>
        <dbReference type="UniProtKB" id="Q96SW2"/>
    </source>
</evidence>
<evidence type="ECO:0000255" key="3">
    <source>
        <dbReference type="PROSITE-ProRule" id="PRU01123"/>
    </source>
</evidence>
<evidence type="ECO:0000255" key="4">
    <source>
        <dbReference type="PROSITE-ProRule" id="PRU01124"/>
    </source>
</evidence>
<evidence type="ECO:0000256" key="5">
    <source>
        <dbReference type="SAM" id="MobiDB-lite"/>
    </source>
</evidence>
<evidence type="ECO:0000305" key="6"/>
<reference key="1">
    <citation type="submission" date="2004-09" db="EMBL/GenBank/DDBJ databases">
        <authorList>
            <consortium name="NIH - Xenopus Gene Collection (XGC) project"/>
        </authorList>
    </citation>
    <scope>NUCLEOTIDE SEQUENCE [LARGE SCALE MRNA]</scope>
    <source>
        <tissue>Embryo</tissue>
    </source>
</reference>
<feature type="chain" id="PRO_0000076164" description="Protein cereblon">
    <location>
        <begin position="1"/>
        <end position="447"/>
    </location>
</feature>
<feature type="domain" description="Lon N-terminal" evidence="3">
    <location>
        <begin position="82"/>
        <end position="322"/>
    </location>
</feature>
<feature type="domain" description="CULT" evidence="4">
    <location>
        <begin position="321"/>
        <end position="429"/>
    </location>
</feature>
<feature type="region of interest" description="Disordered" evidence="5">
    <location>
        <begin position="1"/>
        <end position="47"/>
    </location>
</feature>
<feature type="compositionally biased region" description="Acidic residues" evidence="5">
    <location>
        <begin position="1"/>
        <end position="10"/>
    </location>
</feature>
<feature type="compositionally biased region" description="Acidic residues" evidence="5">
    <location>
        <begin position="25"/>
        <end position="34"/>
    </location>
</feature>
<feature type="binding site" evidence="2">
    <location>
        <position position="326"/>
    </location>
    <ligand>
        <name>Zn(2+)</name>
        <dbReference type="ChEBI" id="CHEBI:29105"/>
    </ligand>
</feature>
<feature type="binding site" evidence="2">
    <location>
        <position position="329"/>
    </location>
    <ligand>
        <name>Zn(2+)</name>
        <dbReference type="ChEBI" id="CHEBI:29105"/>
    </ligand>
</feature>
<feature type="binding site" evidence="2">
    <location>
        <position position="383"/>
    </location>
    <ligand>
        <name>(S)-thalidomide</name>
        <dbReference type="ChEBI" id="CHEBI:61918"/>
    </ligand>
</feature>
<feature type="binding site" evidence="2">
    <location>
        <position position="389"/>
    </location>
    <ligand>
        <name>(S)-thalidomide</name>
        <dbReference type="ChEBI" id="CHEBI:61918"/>
    </ligand>
</feature>
<feature type="binding site" evidence="2">
    <location>
        <position position="394"/>
    </location>
    <ligand>
        <name>Zn(2+)</name>
        <dbReference type="ChEBI" id="CHEBI:29105"/>
    </ligand>
</feature>
<feature type="binding site" evidence="2">
    <location>
        <position position="397"/>
    </location>
    <ligand>
        <name>Zn(2+)</name>
        <dbReference type="ChEBI" id="CHEBI:29105"/>
    </ligand>
</feature>
<name>CRBN_XENTR</name>
<gene>
    <name type="primary">crbn</name>
</gene>